<geneLocation type="chloroplast"/>
<proteinExistence type="inferred from homology"/>
<gene>
    <name type="primary">rps7-A</name>
</gene>
<gene>
    <name type="primary">rps7-B</name>
</gene>
<feature type="chain" id="PRO_0000124422" description="Small ribosomal subunit protein uS7cz/uS7cy">
    <location>
        <begin position="1"/>
        <end position="155"/>
    </location>
</feature>
<name>RR7_AMBTC</name>
<evidence type="ECO:0000250" key="1"/>
<evidence type="ECO:0000255" key="2">
    <source>
        <dbReference type="HAMAP-Rule" id="MF_00480"/>
    </source>
</evidence>
<evidence type="ECO:0000305" key="3"/>
<sequence>MSRRGTAEEKTAKSDPIYRNRLVNMLVNRILKHGKKSLAYQIIYRALKKIQQKTETNPLSVLRQAIRGVTPDIAVKARRVGGSTHQVPIEIGSTQGKALAIRWLLGASRKRPGRNMAFKLSSELVDAAKGNGDAIRKKEETHRMAEANRAFAHFR</sequence>
<comment type="function">
    <text evidence="1">One of the primary rRNA binding proteins, it binds directly to 16S rRNA where it nucleates assembly of the head domain of the 30S subunit.</text>
</comment>
<comment type="subunit">
    <text>Part of the 30S ribosomal subunit.</text>
</comment>
<comment type="subcellular location">
    <subcellularLocation>
        <location>Plastid</location>
        <location>Chloroplast</location>
    </subcellularLocation>
</comment>
<comment type="similarity">
    <text evidence="3">Belongs to the universal ribosomal protein uS7 family.</text>
</comment>
<organism>
    <name type="scientific">Amborella trichopoda</name>
    <dbReference type="NCBI Taxonomy" id="13333"/>
    <lineage>
        <taxon>Eukaryota</taxon>
        <taxon>Viridiplantae</taxon>
        <taxon>Streptophyta</taxon>
        <taxon>Embryophyta</taxon>
        <taxon>Tracheophyta</taxon>
        <taxon>Spermatophyta</taxon>
        <taxon>Magnoliopsida</taxon>
        <taxon>Amborellales</taxon>
        <taxon>Amborellaceae</taxon>
        <taxon>Amborella</taxon>
    </lineage>
</organism>
<accession>Q9GE26</accession>
<protein>
    <recommendedName>
        <fullName evidence="2">Small ribosomal subunit protein uS7cz/uS7cy</fullName>
    </recommendedName>
    <alternativeName>
        <fullName>30S ribosomal protein S7, chloroplastic</fullName>
    </alternativeName>
</protein>
<reference key="1">
    <citation type="journal article" date="2000" name="Am. J. Bot.">
        <title>Utility of 17 chloroplast genes for inferring the phylogeny of the basal angiosperms.</title>
        <authorList>
            <person name="Graham S.W."/>
            <person name="Olmstead R.G."/>
        </authorList>
    </citation>
    <scope>NUCLEOTIDE SEQUENCE [GENOMIC DNA]</scope>
</reference>
<reference key="2">
    <citation type="journal article" date="2003" name="Mol. Biol. Evol.">
        <title>Analysis of the Amborella trichopoda chloroplast genome sequence suggests that Amborella is not a basal angiosperm.</title>
        <authorList>
            <person name="Goremykin V.V."/>
            <person name="Hirsch-Ernst K.I."/>
            <person name="Wolfl S."/>
            <person name="Hellwig F.H."/>
        </authorList>
    </citation>
    <scope>NUCLEOTIDE SEQUENCE [LARGE SCALE GENOMIC DNA]</scope>
</reference>
<keyword id="KW-0150">Chloroplast</keyword>
<keyword id="KW-0934">Plastid</keyword>
<keyword id="KW-1185">Reference proteome</keyword>
<keyword id="KW-0687">Ribonucleoprotein</keyword>
<keyword id="KW-0689">Ribosomal protein</keyword>
<keyword id="KW-0694">RNA-binding</keyword>
<keyword id="KW-0699">rRNA-binding</keyword>
<dbReference type="EMBL" id="AF235045">
    <property type="protein sequence ID" value="AAG44381.1"/>
    <property type="molecule type" value="Genomic_DNA"/>
</dbReference>
<dbReference type="EMBL" id="AJ506156">
    <property type="protein sequence ID" value="CAD45152.1"/>
    <property type="molecule type" value="Genomic_DNA"/>
</dbReference>
<dbReference type="EMBL" id="AJ506156">
    <property type="protein sequence ID" value="CAD45165.1"/>
    <property type="molecule type" value="Genomic_DNA"/>
</dbReference>
<dbReference type="SMR" id="Q9GE26"/>
<dbReference type="STRING" id="13333.Q9GE26"/>
<dbReference type="KEGG" id="atr:2546561"/>
<dbReference type="KEGG" id="atr:2546620"/>
<dbReference type="eggNOG" id="KOG3291">
    <property type="taxonomic scope" value="Eukaryota"/>
</dbReference>
<dbReference type="OrthoDB" id="35139at2759"/>
<dbReference type="Proteomes" id="UP000017836">
    <property type="component" value="Chloroplast"/>
</dbReference>
<dbReference type="GO" id="GO:0009507">
    <property type="term" value="C:chloroplast"/>
    <property type="evidence" value="ECO:0007669"/>
    <property type="project" value="UniProtKB-SubCell"/>
</dbReference>
<dbReference type="GO" id="GO:0005840">
    <property type="term" value="C:ribosome"/>
    <property type="evidence" value="ECO:0000318"/>
    <property type="project" value="GO_Central"/>
</dbReference>
<dbReference type="GO" id="GO:0015935">
    <property type="term" value="C:small ribosomal subunit"/>
    <property type="evidence" value="ECO:0007669"/>
    <property type="project" value="InterPro"/>
</dbReference>
<dbReference type="GO" id="GO:0003729">
    <property type="term" value="F:mRNA binding"/>
    <property type="evidence" value="ECO:0000318"/>
    <property type="project" value="GO_Central"/>
</dbReference>
<dbReference type="GO" id="GO:0019843">
    <property type="term" value="F:rRNA binding"/>
    <property type="evidence" value="ECO:0000318"/>
    <property type="project" value="GO_Central"/>
</dbReference>
<dbReference type="GO" id="GO:0003735">
    <property type="term" value="F:structural constituent of ribosome"/>
    <property type="evidence" value="ECO:0000318"/>
    <property type="project" value="GO_Central"/>
</dbReference>
<dbReference type="GO" id="GO:0000028">
    <property type="term" value="P:ribosomal small subunit assembly"/>
    <property type="evidence" value="ECO:0000318"/>
    <property type="project" value="GO_Central"/>
</dbReference>
<dbReference type="GO" id="GO:0006412">
    <property type="term" value="P:translation"/>
    <property type="evidence" value="ECO:0000318"/>
    <property type="project" value="GO_Central"/>
</dbReference>
<dbReference type="CDD" id="cd14871">
    <property type="entry name" value="uS7_Chloroplast"/>
    <property type="match status" value="1"/>
</dbReference>
<dbReference type="FunFam" id="1.10.455.10:FF:000001">
    <property type="entry name" value="30S ribosomal protein S7"/>
    <property type="match status" value="1"/>
</dbReference>
<dbReference type="Gene3D" id="1.10.455.10">
    <property type="entry name" value="Ribosomal protein S7 domain"/>
    <property type="match status" value="1"/>
</dbReference>
<dbReference type="HAMAP" id="MF_00480_B">
    <property type="entry name" value="Ribosomal_uS7_B"/>
    <property type="match status" value="1"/>
</dbReference>
<dbReference type="InterPro" id="IPR000235">
    <property type="entry name" value="Ribosomal_uS7"/>
</dbReference>
<dbReference type="InterPro" id="IPR005717">
    <property type="entry name" value="Ribosomal_uS7_bac/org-type"/>
</dbReference>
<dbReference type="InterPro" id="IPR020606">
    <property type="entry name" value="Ribosomal_uS7_CS"/>
</dbReference>
<dbReference type="InterPro" id="IPR023798">
    <property type="entry name" value="Ribosomal_uS7_dom"/>
</dbReference>
<dbReference type="InterPro" id="IPR036823">
    <property type="entry name" value="Ribosomal_uS7_dom_sf"/>
</dbReference>
<dbReference type="NCBIfam" id="TIGR01029">
    <property type="entry name" value="rpsG_bact"/>
    <property type="match status" value="1"/>
</dbReference>
<dbReference type="PANTHER" id="PTHR11205">
    <property type="entry name" value="RIBOSOMAL PROTEIN S7"/>
    <property type="match status" value="1"/>
</dbReference>
<dbReference type="Pfam" id="PF00177">
    <property type="entry name" value="Ribosomal_S7"/>
    <property type="match status" value="1"/>
</dbReference>
<dbReference type="PIRSF" id="PIRSF002122">
    <property type="entry name" value="RPS7p_RPS7a_RPS5e_RPS7o"/>
    <property type="match status" value="1"/>
</dbReference>
<dbReference type="SUPFAM" id="SSF47973">
    <property type="entry name" value="Ribosomal protein S7"/>
    <property type="match status" value="1"/>
</dbReference>
<dbReference type="PROSITE" id="PS00052">
    <property type="entry name" value="RIBOSOMAL_S7"/>
    <property type="match status" value="1"/>
</dbReference>